<accession>B2US70</accession>
<keyword id="KW-0030">Aminoacyl-tRNA synthetase</keyword>
<keyword id="KW-0067">ATP-binding</keyword>
<keyword id="KW-0963">Cytoplasm</keyword>
<keyword id="KW-0436">Ligase</keyword>
<keyword id="KW-0547">Nucleotide-binding</keyword>
<keyword id="KW-0648">Protein biosynthesis</keyword>
<protein>
    <recommendedName>
        <fullName evidence="1">Proline--tRNA ligase</fullName>
        <ecNumber evidence="1">6.1.1.15</ecNumber>
    </recommendedName>
    <alternativeName>
        <fullName evidence="1">Prolyl-tRNA synthetase</fullName>
        <shortName evidence="1">ProRS</shortName>
    </alternativeName>
</protein>
<sequence length="577" mass="65307">MLFSKLFAPTLKEPPKDAVLKSHKHLAQAGYIYQVGSGIYNFLPLAKKVLDKIENITHKRMQEHGAQNILMSFVVLASLWEKSGRLDKYGKELLVFKDRKDNDFVLSPTLEENITEIAANFIKSYKQLPVHLYQIHTKFRDEIRPRFGLVRAREFIMKDGYSFHEDAESLDKEFLNTQSAYKEILSDLGLDFRIVEADSGAIGGSKSREFVVLTECGEDTIVVCKNCDYAANIEIAKRSKRPEPLNVPKAQLAKFPTPNTTSAQSVAEFFKTEPYFVLKALVRKVIHKDKETLACFFVRGDDNLEEVKALNALNLLGANALELREASKEDLNNAGLIAGFIGPYGLKKHVSYIIFDEDLKEGDCLIVGANEKDFHAVGVDLKGFENLVYADIVQVKESDHCPDCQGELKYHKSLEVGHIFKLGQGYAKSLKASFLDKNGKERFFEMGCYGIGISRLLSAILEQKSDDLGCVWTKNTAPFDVVIVVSNWKDEAQKKLAFEVYERLRQKGVDALLDDRDARFGAKMRDFELIGERLALIVGKQTLESKEFECIKRANLEKQTLKDTELEEKILEMLKSE</sequence>
<comment type="function">
    <text evidence="1">Catalyzes the attachment of proline to tRNA(Pro) in a two-step reaction: proline is first activated by ATP to form Pro-AMP and then transferred to the acceptor end of tRNA(Pro). As ProRS can inadvertently accommodate and process non-cognate amino acids such as alanine and cysteine, to avoid such errors it has two additional distinct editing activities against alanine. One activity is designated as 'pretransfer' editing and involves the tRNA(Pro)-independent hydrolysis of activated Ala-AMP. The other activity is designated 'posttransfer' editing and involves deacylation of mischarged Ala-tRNA(Pro). The misacylated Cys-tRNA(Pro) is not edited by ProRS.</text>
</comment>
<comment type="catalytic activity">
    <reaction evidence="1">
        <text>tRNA(Pro) + L-proline + ATP = L-prolyl-tRNA(Pro) + AMP + diphosphate</text>
        <dbReference type="Rhea" id="RHEA:14305"/>
        <dbReference type="Rhea" id="RHEA-COMP:9700"/>
        <dbReference type="Rhea" id="RHEA-COMP:9702"/>
        <dbReference type="ChEBI" id="CHEBI:30616"/>
        <dbReference type="ChEBI" id="CHEBI:33019"/>
        <dbReference type="ChEBI" id="CHEBI:60039"/>
        <dbReference type="ChEBI" id="CHEBI:78442"/>
        <dbReference type="ChEBI" id="CHEBI:78532"/>
        <dbReference type="ChEBI" id="CHEBI:456215"/>
        <dbReference type="EC" id="6.1.1.15"/>
    </reaction>
</comment>
<comment type="subunit">
    <text evidence="1">Homodimer.</text>
</comment>
<comment type="subcellular location">
    <subcellularLocation>
        <location evidence="1">Cytoplasm</location>
    </subcellularLocation>
</comment>
<comment type="domain">
    <text evidence="1">Consists of three domains: the N-terminal catalytic domain, the editing domain and the C-terminal anticodon-binding domain.</text>
</comment>
<comment type="similarity">
    <text evidence="1">Belongs to the class-II aminoacyl-tRNA synthetase family. ProS type 1 subfamily.</text>
</comment>
<dbReference type="EC" id="6.1.1.15" evidence="1"/>
<dbReference type="EMBL" id="CP001072">
    <property type="protein sequence ID" value="ACD47702.1"/>
    <property type="molecule type" value="Genomic_DNA"/>
</dbReference>
<dbReference type="RefSeq" id="WP_000899233.1">
    <property type="nucleotide sequence ID" value="NC_010698.2"/>
</dbReference>
<dbReference type="SMR" id="B2US70"/>
<dbReference type="KEGG" id="hps:HPSH_01240"/>
<dbReference type="HOGENOM" id="CLU_016739_0_0_7"/>
<dbReference type="GO" id="GO:0005829">
    <property type="term" value="C:cytosol"/>
    <property type="evidence" value="ECO:0007669"/>
    <property type="project" value="TreeGrafter"/>
</dbReference>
<dbReference type="GO" id="GO:0002161">
    <property type="term" value="F:aminoacyl-tRNA deacylase activity"/>
    <property type="evidence" value="ECO:0007669"/>
    <property type="project" value="InterPro"/>
</dbReference>
<dbReference type="GO" id="GO:0005524">
    <property type="term" value="F:ATP binding"/>
    <property type="evidence" value="ECO:0007669"/>
    <property type="project" value="UniProtKB-UniRule"/>
</dbReference>
<dbReference type="GO" id="GO:0004827">
    <property type="term" value="F:proline-tRNA ligase activity"/>
    <property type="evidence" value="ECO:0007669"/>
    <property type="project" value="UniProtKB-UniRule"/>
</dbReference>
<dbReference type="GO" id="GO:0006433">
    <property type="term" value="P:prolyl-tRNA aminoacylation"/>
    <property type="evidence" value="ECO:0007669"/>
    <property type="project" value="UniProtKB-UniRule"/>
</dbReference>
<dbReference type="CDD" id="cd04334">
    <property type="entry name" value="ProRS-INS"/>
    <property type="match status" value="1"/>
</dbReference>
<dbReference type="CDD" id="cd00861">
    <property type="entry name" value="ProRS_anticodon_short"/>
    <property type="match status" value="1"/>
</dbReference>
<dbReference type="CDD" id="cd00779">
    <property type="entry name" value="ProRS_core_prok"/>
    <property type="match status" value="1"/>
</dbReference>
<dbReference type="FunFam" id="3.30.930.10:FF:000065">
    <property type="entry name" value="Proline--tRNA ligase"/>
    <property type="match status" value="1"/>
</dbReference>
<dbReference type="FunFam" id="3.30.930.10:FF:000066">
    <property type="entry name" value="Proline--tRNA ligase"/>
    <property type="match status" value="1"/>
</dbReference>
<dbReference type="FunFam" id="3.40.50.800:FF:000051">
    <property type="entry name" value="Proline--tRNA ligase"/>
    <property type="match status" value="1"/>
</dbReference>
<dbReference type="Gene3D" id="3.40.50.800">
    <property type="entry name" value="Anticodon-binding domain"/>
    <property type="match status" value="1"/>
</dbReference>
<dbReference type="Gene3D" id="3.30.930.10">
    <property type="entry name" value="Bira Bifunctional Protein, Domain 2"/>
    <property type="match status" value="2"/>
</dbReference>
<dbReference type="HAMAP" id="MF_01569">
    <property type="entry name" value="Pro_tRNA_synth_type1"/>
    <property type="match status" value="1"/>
</dbReference>
<dbReference type="InterPro" id="IPR002314">
    <property type="entry name" value="aa-tRNA-synt_IIb"/>
</dbReference>
<dbReference type="InterPro" id="IPR006195">
    <property type="entry name" value="aa-tRNA-synth_II"/>
</dbReference>
<dbReference type="InterPro" id="IPR045864">
    <property type="entry name" value="aa-tRNA-synth_II/BPL/LPL"/>
</dbReference>
<dbReference type="InterPro" id="IPR004154">
    <property type="entry name" value="Anticodon-bd"/>
</dbReference>
<dbReference type="InterPro" id="IPR036621">
    <property type="entry name" value="Anticodon-bd_dom_sf"/>
</dbReference>
<dbReference type="InterPro" id="IPR002316">
    <property type="entry name" value="Pro-tRNA-ligase_IIa"/>
</dbReference>
<dbReference type="InterPro" id="IPR004500">
    <property type="entry name" value="Pro-tRNA-synth_IIa_bac-type"/>
</dbReference>
<dbReference type="InterPro" id="IPR023717">
    <property type="entry name" value="Pro-tRNA-Synthase_IIa_type1"/>
</dbReference>
<dbReference type="InterPro" id="IPR050062">
    <property type="entry name" value="Pro-tRNA_synthetase"/>
</dbReference>
<dbReference type="InterPro" id="IPR044140">
    <property type="entry name" value="ProRS_anticodon_short"/>
</dbReference>
<dbReference type="InterPro" id="IPR033730">
    <property type="entry name" value="ProRS_core_prok"/>
</dbReference>
<dbReference type="InterPro" id="IPR036754">
    <property type="entry name" value="YbaK/aa-tRNA-synt-asso_dom_sf"/>
</dbReference>
<dbReference type="InterPro" id="IPR007214">
    <property type="entry name" value="YbaK/aa-tRNA-synth-assoc-dom"/>
</dbReference>
<dbReference type="NCBIfam" id="NF006625">
    <property type="entry name" value="PRK09194.1"/>
    <property type="match status" value="1"/>
</dbReference>
<dbReference type="NCBIfam" id="TIGR00409">
    <property type="entry name" value="proS_fam_II"/>
    <property type="match status" value="1"/>
</dbReference>
<dbReference type="PANTHER" id="PTHR42753">
    <property type="entry name" value="MITOCHONDRIAL RIBOSOME PROTEIN L39/PROLYL-TRNA LIGASE FAMILY MEMBER"/>
    <property type="match status" value="1"/>
</dbReference>
<dbReference type="PANTHER" id="PTHR42753:SF2">
    <property type="entry name" value="PROLINE--TRNA LIGASE"/>
    <property type="match status" value="1"/>
</dbReference>
<dbReference type="Pfam" id="PF03129">
    <property type="entry name" value="HGTP_anticodon"/>
    <property type="match status" value="1"/>
</dbReference>
<dbReference type="Pfam" id="PF00587">
    <property type="entry name" value="tRNA-synt_2b"/>
    <property type="match status" value="1"/>
</dbReference>
<dbReference type="Pfam" id="PF04073">
    <property type="entry name" value="tRNA_edit"/>
    <property type="match status" value="1"/>
</dbReference>
<dbReference type="PRINTS" id="PR01046">
    <property type="entry name" value="TRNASYNTHPRO"/>
</dbReference>
<dbReference type="SUPFAM" id="SSF52954">
    <property type="entry name" value="Class II aaRS ABD-related"/>
    <property type="match status" value="1"/>
</dbReference>
<dbReference type="SUPFAM" id="SSF55681">
    <property type="entry name" value="Class II aaRS and biotin synthetases"/>
    <property type="match status" value="1"/>
</dbReference>
<dbReference type="SUPFAM" id="SSF55826">
    <property type="entry name" value="YbaK/ProRS associated domain"/>
    <property type="match status" value="1"/>
</dbReference>
<dbReference type="PROSITE" id="PS50862">
    <property type="entry name" value="AA_TRNA_LIGASE_II"/>
    <property type="match status" value="1"/>
</dbReference>
<proteinExistence type="inferred from homology"/>
<feature type="chain" id="PRO_1000199393" description="Proline--tRNA ligase">
    <location>
        <begin position="1"/>
        <end position="577"/>
    </location>
</feature>
<evidence type="ECO:0000255" key="1">
    <source>
        <dbReference type="HAMAP-Rule" id="MF_01569"/>
    </source>
</evidence>
<gene>
    <name evidence="1" type="primary">proS</name>
    <name type="ordered locus">HPSH_01240</name>
</gene>
<reference key="1">
    <citation type="submission" date="2008-05" db="EMBL/GenBank/DDBJ databases">
        <title>Genome sequence of Helicobacter pylori from the remote Amazon: traces of Asian ancestry of the first Americans.</title>
        <authorList>
            <person name="Kersulyte D."/>
            <person name="Kalia A."/>
            <person name="Gilman R.H."/>
            <person name="Berg D.E."/>
        </authorList>
    </citation>
    <scope>NUCLEOTIDE SEQUENCE [LARGE SCALE GENOMIC DNA]</scope>
    <source>
        <strain>Shi470</strain>
    </source>
</reference>
<name>SYP_HELPS</name>
<organism>
    <name type="scientific">Helicobacter pylori (strain Shi470)</name>
    <dbReference type="NCBI Taxonomy" id="512562"/>
    <lineage>
        <taxon>Bacteria</taxon>
        <taxon>Pseudomonadati</taxon>
        <taxon>Campylobacterota</taxon>
        <taxon>Epsilonproteobacteria</taxon>
        <taxon>Campylobacterales</taxon>
        <taxon>Helicobacteraceae</taxon>
        <taxon>Helicobacter</taxon>
    </lineage>
</organism>